<proteinExistence type="evidence at protein level"/>
<keyword id="KW-0131">Cell cycle</keyword>
<keyword id="KW-0175">Coiled coil</keyword>
<keyword id="KW-0963">Cytoplasm</keyword>
<keyword id="KW-0206">Cytoskeleton</keyword>
<keyword id="KW-0217">Developmental protein</keyword>
<keyword id="KW-1185">Reference proteome</keyword>
<organism>
    <name type="scientific">Caenorhabditis elegans</name>
    <dbReference type="NCBI Taxonomy" id="6239"/>
    <lineage>
        <taxon>Eukaryota</taxon>
        <taxon>Metazoa</taxon>
        <taxon>Ecdysozoa</taxon>
        <taxon>Nematoda</taxon>
        <taxon>Chromadorea</taxon>
        <taxon>Rhabditida</taxon>
        <taxon>Rhabditina</taxon>
        <taxon>Rhabditomorpha</taxon>
        <taxon>Rhabditoidea</taxon>
        <taxon>Rhabditidae</taxon>
        <taxon>Peloderinae</taxon>
        <taxon>Caenorhabditis</taxon>
    </lineage>
</organism>
<accession>P91870</accession>
<gene>
    <name evidence="8" type="primary">spd-2</name>
    <name evidence="8" type="ORF">F32H2.3</name>
</gene>
<comment type="function">
    <text evidence="3 4 6">Required both for centrosome duplication and maturation (PubMed:15068791, PubMed:15186742, PubMed:19081077). Required for pericentriolar material (PCM) recruitment (PubMed:15068791, PubMed:15186742).</text>
</comment>
<comment type="subunit">
    <text evidence="7">Interacts with sas-7 (via C-terminus); may be recruited to centrioles by sas-7.</text>
</comment>
<comment type="interaction">
    <interactant intactId="EBI-320962">
        <id>P91870</id>
    </interactant>
    <interactant intactId="EBI-322479">
        <id>P91349</id>
        <label>spd-5</label>
    </interactant>
    <organismsDiffer>false</organismsDiffer>
    <experiments>3</experiments>
</comment>
<comment type="interaction">
    <interactant intactId="EBI-320962">
        <id>P91870</id>
    </interactant>
    <interactant intactId="EBI-323555">
        <id>Q9GT24</id>
        <label>zyg-1</label>
    </interactant>
    <organismsDiffer>false</organismsDiffer>
    <experiments>6</experiments>
</comment>
<comment type="subcellular location">
    <subcellularLocation>
        <location evidence="3 4">Cytoplasm</location>
        <location evidence="3 4">Cytoskeleton</location>
        <location evidence="3 4">Microtubule organizing center</location>
        <location evidence="3 4">Centrosome</location>
        <location evidence="3 4">Centriole</location>
    </subcellularLocation>
    <subcellularLocation>
        <location evidence="4 6">Cytoplasm</location>
        <location evidence="4 6">Cytoskeleton</location>
        <location evidence="4 6">Microtubule organizing center</location>
        <location evidence="4 6">Centrosome</location>
    </subcellularLocation>
    <text evidence="3 4 5">Localizes to the centriole throughout the cell cycle and accumulates on the PCM during mitosis (PubMed:15068791, PubMed:15186742). Requires spd-5 for its accumulation on the PCM (PubMed:15068791, PubMed:15186742). Recruitment to the centrosome during prophase of the 1-cell embryo is regulated by the cye-1/cdk-2 complex (PubMed:17115027).</text>
</comment>
<comment type="developmental stage">
    <text>Associates with centrosomes, during nearly all of the developmental stages. In the hermaphrodite gonad, it localizes as discrete perinuclear foci in the mitotic portion of the germline. These foci are also evident during the early stages of oogenesis but are absent in mature oocytes. In contrast, in mature sperm these foci are present with each male gamete containing a single dot adjacent to the nucleus. Similarly, in meiotic stage embryos, a single expression dot is observed next to the male pronucleus. In slightly older embryos, one or two perinuclear foci are observed. The intensity of the foci increase with the age of the embryos and at mitosis it localizes to both spindle poles. As embryos progress through anaphase and telophase, the intensity of staining gradually diminishes. Careful examination of the staining pattern at this stage reveals a diffuse expression centered on one or two very bright dots corresponding to both centrioles as well the pericentriolar region.</text>
</comment>
<reference key="1">
    <citation type="journal article" date="2004" name="Dev. Cell">
        <title>Centrosome maturation and duplication in C. elegans require the coiled-coil protein SPD-2.</title>
        <authorList>
            <person name="Kemp C.A."/>
            <person name="Kopish K.R."/>
            <person name="Zipperlen P."/>
            <person name="Ahringer J."/>
            <person name="O'Connell K.F."/>
        </authorList>
    </citation>
    <scope>NUCLEOTIDE SEQUENCE [MRNA]</scope>
    <scope>FUNCTION</scope>
    <scope>SUBCELLULAR LOCATION</scope>
    <scope>MUTAGENESIS OF GLY-573; GLY-615 AND ARG-710</scope>
</reference>
<reference key="2">
    <citation type="journal article" date="1998" name="Science">
        <title>Genome sequence of the nematode C. elegans: a platform for investigating biology.</title>
        <authorList>
            <consortium name="The C. elegans sequencing consortium"/>
        </authorList>
    </citation>
    <scope>NUCLEOTIDE SEQUENCE [LARGE SCALE GENOMIC DNA]</scope>
    <source>
        <strain>Bristol N2</strain>
    </source>
</reference>
<reference key="3">
    <citation type="journal article" date="2004" name="Curr. Biol.">
        <title>The Caenorhabditis elegans centrosomal protein SPD-2 is required for both pericentriolar material recruitment and centriole duplication.</title>
        <authorList>
            <person name="Pelletier L."/>
            <person name="Oezlu N."/>
            <person name="Hannak E."/>
            <person name="Cowan C."/>
            <person name="Habermann B."/>
            <person name="Ruer M."/>
            <person name="Mueller-Reichert T."/>
            <person name="Hyman A.A."/>
        </authorList>
    </citation>
    <scope>FUNCTION</scope>
    <scope>SUBCELLULAR LOCATION</scope>
</reference>
<reference key="4">
    <citation type="journal article" date="2006" name="Nat. Cell Biol.">
        <title>Cyclin E-Cdk2 temporally regulates centrosome assembly and establishment of polarity in Caenorhabditis elegans embryos.</title>
        <authorList>
            <person name="Cowan C.R."/>
            <person name="Hyman A.A."/>
        </authorList>
    </citation>
    <scope>SUBCELLULAR LOCATION</scope>
</reference>
<reference key="5">
    <citation type="journal article" date="2008" name="Dev. Cell">
        <title>The conserved protein SZY-20 opposes the Plk4-related kinase ZYG-1 to limit centrosome size.</title>
        <authorList>
            <person name="Song M.H."/>
            <person name="Aravind L."/>
            <person name="Mueller-Reichert T."/>
            <person name="O'Connell K.F."/>
        </authorList>
    </citation>
    <scope>FUNCTION</scope>
    <scope>SUBCELLULAR LOCATION</scope>
    <scope>MUTAGENESIS OF GLY-615</scope>
</reference>
<reference key="6">
    <citation type="journal article" date="2017" name="Elife">
        <title>Centriolar SAS-7 acts upstream of SPD-2 to regulate centriole assembly and pericentriolar material formation.</title>
        <authorList>
            <person name="Sugioka K."/>
            <person name="Hamill D.R."/>
            <person name="Lowry J.B."/>
            <person name="McNeely M.E."/>
            <person name="Enrick M."/>
            <person name="Richter A.C."/>
            <person name="Kiebler L.E."/>
            <person name="Priess J.R."/>
            <person name="Bowerman B."/>
        </authorList>
    </citation>
    <scope>INTERACTION WITH SAS-7</scope>
</reference>
<name>SPD2_CAEEL</name>
<sequence>MEDDAPMNLCNEQFEEIEDSPIDDNDNESFYNADGDVELEEEEVHETPKNFKNGGRFKTNMTNPKVNDLTTIEEKNEDLRSAASSRSASRPASVMSDKSFSSQFEFQSGGENAIEEYTNQVFADENKADLLFPETSKFMNGASPPKDKHHSWEPSIHHYDKQPPPDIQTNSPVFGNLNHRKNKLIPQARAKPGANDNEIVERDNDENVPTTSDKSAFITSPMNSTNHDEKTSTPKRPTNRKIGQYQGPNFDLSSIYVGSPQHQNTSISTGQQMPTSSYSHAHSETMMTNQTINESMVRRVLNGNNKNQDLFAALEEARKRRAAQPSKPDFRINTTRTRVPIKPTSARHSGNVVSSTSNDNTTAASSKDLTTSRKAMETFRQNASMADATNSNTASMTSILSTISTARTDISRSSRNHGGGFSNTSVSTVIPANNGNVSLSHGRDGRDSVSSVRTMSRASSTSTVYAGSTFSGVSKPLRIHAKRVAFGCVAVGETLRVEVEVENISDRQCLVRASTDSTTPVYQILDNKLTMVDPKKSIKFQVSFSPSSVGRYQVIMSIEVPAQNFIHKIPMWGNGGIAKFVPTSPDLQQTINQSEYAMCTSCAKRISFKISNSAGTRDGFAMIKVFDSAMRQLPDGCVAFFPAPGFIVKKKSDKRVDIRIDSSYIDLHDENNFRTSSSLSTASTTSSFQRRILPGAKFFVHVVWGEETMRTRLRLLEVRTGQHQLIDGHDFTSFQFSDEEVLRAVPVGFPAIKPEDRDLFAASYRSFFINFFTSTTEFRAATSRKKKEICSNDDSTLLETTAFRNQTFVNDVTIVPNTRFSNRK</sequence>
<evidence type="ECO:0000255" key="1"/>
<evidence type="ECO:0000256" key="2">
    <source>
        <dbReference type="SAM" id="MobiDB-lite"/>
    </source>
</evidence>
<evidence type="ECO:0000269" key="3">
    <source>
    </source>
</evidence>
<evidence type="ECO:0000269" key="4">
    <source>
    </source>
</evidence>
<evidence type="ECO:0000269" key="5">
    <source>
    </source>
</evidence>
<evidence type="ECO:0000269" key="6">
    <source>
    </source>
</evidence>
<evidence type="ECO:0000269" key="7">
    <source>
    </source>
</evidence>
<evidence type="ECO:0000312" key="8">
    <source>
        <dbReference type="WormBase" id="F32H2.3"/>
    </source>
</evidence>
<dbReference type="EMBL" id="AY340594">
    <property type="protein sequence ID" value="AAQ17186.1"/>
    <property type="molecule type" value="mRNA"/>
</dbReference>
<dbReference type="EMBL" id="Z81523">
    <property type="protein sequence ID" value="CAB04243.1"/>
    <property type="molecule type" value="Genomic_DNA"/>
</dbReference>
<dbReference type="PIR" id="T21675">
    <property type="entry name" value="T21675"/>
</dbReference>
<dbReference type="RefSeq" id="NP_492414.1">
    <property type="nucleotide sequence ID" value="NM_060013.8"/>
</dbReference>
<dbReference type="SMR" id="P91870"/>
<dbReference type="BioGRID" id="38145">
    <property type="interactions" value="16"/>
</dbReference>
<dbReference type="DIP" id="DIP-25500N"/>
<dbReference type="FunCoup" id="P91870">
    <property type="interactions" value="408"/>
</dbReference>
<dbReference type="IntAct" id="P91870">
    <property type="interactions" value="7"/>
</dbReference>
<dbReference type="STRING" id="6239.F32H2.3.1"/>
<dbReference type="iPTMnet" id="P91870"/>
<dbReference type="PaxDb" id="6239-F32H2.3.1"/>
<dbReference type="PeptideAtlas" id="P91870"/>
<dbReference type="EnsemblMetazoa" id="F32H2.3.1">
    <property type="protein sequence ID" value="F32H2.3.1"/>
    <property type="gene ID" value="WBGene00004953"/>
</dbReference>
<dbReference type="GeneID" id="172712"/>
<dbReference type="KEGG" id="cel:CELE_F32H2.3"/>
<dbReference type="UCSC" id="F32H2.3.1">
    <property type="organism name" value="c. elegans"/>
</dbReference>
<dbReference type="AGR" id="WB:WBGene00004953"/>
<dbReference type="CTD" id="39850"/>
<dbReference type="WormBase" id="F32H2.3">
    <property type="protein sequence ID" value="CE09878"/>
    <property type="gene ID" value="WBGene00004953"/>
    <property type="gene designation" value="spd-2"/>
</dbReference>
<dbReference type="eggNOG" id="ENOG502RT76">
    <property type="taxonomic scope" value="Eukaryota"/>
</dbReference>
<dbReference type="HOGENOM" id="CLU_341384_0_0_1"/>
<dbReference type="InParanoid" id="P91870"/>
<dbReference type="OMA" id="FTKCKFI"/>
<dbReference type="OrthoDB" id="5799239at2759"/>
<dbReference type="SignaLink" id="P91870"/>
<dbReference type="CD-CODE" id="1E117272">
    <property type="entry name" value="Centrosome"/>
</dbReference>
<dbReference type="CD-CODE" id="2665D7F9">
    <property type="entry name" value="Synthetic Condensate 000097"/>
</dbReference>
<dbReference type="CD-CODE" id="2839F8E0">
    <property type="entry name" value="Synthetic Condensate 000108"/>
</dbReference>
<dbReference type="CD-CODE" id="49499F59">
    <property type="entry name" value="Synthetic Condensate 000132"/>
</dbReference>
<dbReference type="CD-CODE" id="DCE83E39">
    <property type="entry name" value="Synthetic Condensate 000127"/>
</dbReference>
<dbReference type="CD-CODE" id="E72E7219">
    <property type="entry name" value="Pericentriolar matrix"/>
</dbReference>
<dbReference type="PRO" id="PR:P91870"/>
<dbReference type="Proteomes" id="UP000001940">
    <property type="component" value="Chromosome I"/>
</dbReference>
<dbReference type="Bgee" id="WBGene00004953">
    <property type="expression patterns" value="Expressed in adult organism and 4 other cell types or tissues"/>
</dbReference>
<dbReference type="GO" id="GO:0005814">
    <property type="term" value="C:centriole"/>
    <property type="evidence" value="ECO:0000314"/>
    <property type="project" value="UniProtKB"/>
</dbReference>
<dbReference type="GO" id="GO:0005813">
    <property type="term" value="C:centrosome"/>
    <property type="evidence" value="ECO:0000314"/>
    <property type="project" value="UniProtKB"/>
</dbReference>
<dbReference type="GO" id="GO:0005737">
    <property type="term" value="C:cytoplasm"/>
    <property type="evidence" value="ECO:0000314"/>
    <property type="project" value="UniProtKB"/>
</dbReference>
<dbReference type="GO" id="GO:0000242">
    <property type="term" value="C:pericentriolar material"/>
    <property type="evidence" value="ECO:0000314"/>
    <property type="project" value="UniProtKB"/>
</dbReference>
<dbReference type="GO" id="GO:0060090">
    <property type="term" value="F:molecular adaptor activity"/>
    <property type="evidence" value="ECO:0000314"/>
    <property type="project" value="DisProt"/>
</dbReference>
<dbReference type="GO" id="GO:0019901">
    <property type="term" value="F:protein kinase binding"/>
    <property type="evidence" value="ECO:0000353"/>
    <property type="project" value="WormBase"/>
</dbReference>
<dbReference type="GO" id="GO:0007099">
    <property type="term" value="P:centriole replication"/>
    <property type="evidence" value="ECO:0000315"/>
    <property type="project" value="WormBase"/>
</dbReference>
<dbReference type="GO" id="GO:0007098">
    <property type="term" value="P:centrosome cycle"/>
    <property type="evidence" value="ECO:0000315"/>
    <property type="project" value="WormBase"/>
</dbReference>
<dbReference type="GO" id="GO:0009792">
    <property type="term" value="P:embryo development ending in birth or egg hatching"/>
    <property type="evidence" value="ECO:0000315"/>
    <property type="project" value="WormBase"/>
</dbReference>
<dbReference type="GO" id="GO:0000226">
    <property type="term" value="P:microtubule cytoskeleton organization"/>
    <property type="evidence" value="ECO:0000315"/>
    <property type="project" value="WormBase"/>
</dbReference>
<dbReference type="GO" id="GO:0008104">
    <property type="term" value="P:protein localization"/>
    <property type="evidence" value="ECO:0000315"/>
    <property type="project" value="UniProtKB"/>
</dbReference>
<dbReference type="GO" id="GO:0040025">
    <property type="term" value="P:vulval development"/>
    <property type="evidence" value="ECO:0000315"/>
    <property type="project" value="WormBase"/>
</dbReference>
<dbReference type="DisProt" id="DP03054"/>
<dbReference type="Gene3D" id="2.60.40.10">
    <property type="entry name" value="Immunoglobulins"/>
    <property type="match status" value="1"/>
</dbReference>
<dbReference type="InterPro" id="IPR054090">
    <property type="entry name" value="Cep192_Spd-2-like_dom"/>
</dbReference>
<dbReference type="InterPro" id="IPR013783">
    <property type="entry name" value="Ig-like_fold"/>
</dbReference>
<dbReference type="Pfam" id="PF22073">
    <property type="entry name" value="Cep192_D4"/>
    <property type="match status" value="1"/>
</dbReference>
<feature type="chain" id="PRO_0000072112" description="Spindle-defective protein 2">
    <location>
        <begin position="1"/>
        <end position="824"/>
    </location>
</feature>
<feature type="region of interest" description="Disordered" evidence="2">
    <location>
        <begin position="16"/>
        <end position="98"/>
    </location>
</feature>
<feature type="region of interest" description="Disordered" evidence="2">
    <location>
        <begin position="189"/>
        <end position="252"/>
    </location>
</feature>
<feature type="region of interest" description="Disordered" evidence="2">
    <location>
        <begin position="342"/>
        <end position="372"/>
    </location>
</feature>
<feature type="region of interest" description="Disordered" evidence="2">
    <location>
        <begin position="433"/>
        <end position="455"/>
    </location>
</feature>
<feature type="coiled-coil region" evidence="1">
    <location>
        <begin position="111"/>
        <end position="131"/>
    </location>
</feature>
<feature type="coiled-coil region" evidence="1">
    <location>
        <begin position="304"/>
        <end position="324"/>
    </location>
</feature>
<feature type="compositionally biased region" description="Acidic residues" evidence="2">
    <location>
        <begin position="16"/>
        <end position="27"/>
    </location>
</feature>
<feature type="compositionally biased region" description="Acidic residues" evidence="2">
    <location>
        <begin position="35"/>
        <end position="44"/>
    </location>
</feature>
<feature type="compositionally biased region" description="Polar residues" evidence="2">
    <location>
        <begin position="59"/>
        <end position="70"/>
    </location>
</feature>
<feature type="compositionally biased region" description="Low complexity" evidence="2">
    <location>
        <begin position="81"/>
        <end position="98"/>
    </location>
</feature>
<feature type="compositionally biased region" description="Polar residues" evidence="2">
    <location>
        <begin position="207"/>
        <end position="225"/>
    </location>
</feature>
<feature type="compositionally biased region" description="Low complexity" evidence="2">
    <location>
        <begin position="349"/>
        <end position="366"/>
    </location>
</feature>
<feature type="mutagenesis site" description="In or183; induces centrosome defects leading to defects in bipolar spindle assembly." evidence="3">
    <original>G</original>
    <variation>S</variation>
    <location>
        <position position="573"/>
    </location>
</feature>
<feature type="mutagenesis site" description="In or188; results in centrosome duplication defects resulting in failure to assemble the bipolar spindle. In some animals, the embryonic lethality phenotype is rescued in a szy-20 (bs52) loss of function mutant background with 65% of embryos displaying centrosome duplication." evidence="3 6">
    <original>G</original>
    <variation>E</variation>
    <location>
        <position position="615"/>
    </location>
</feature>
<feature type="mutagenesis site" description="In oj29; induces centrosome defects leading to defects in bipolar spindle assembly." evidence="3">
    <original>R</original>
    <variation>Q</variation>
    <location>
        <position position="710"/>
    </location>
</feature>
<protein>
    <recommendedName>
        <fullName>Spindle-defective protein 2</fullName>
    </recommendedName>
</protein>